<reference key="1">
    <citation type="journal article" date="2012" name="BMC Genomics">
        <title>Comparative genomics and transcriptomics of lineages I, II, and III strains of Listeria monocytogenes.</title>
        <authorList>
            <person name="Hain T."/>
            <person name="Ghai R."/>
            <person name="Billion A."/>
            <person name="Kuenne C.T."/>
            <person name="Steinweg C."/>
            <person name="Izar B."/>
            <person name="Mohamed W."/>
            <person name="Mraheil M."/>
            <person name="Domann E."/>
            <person name="Schaffrath S."/>
            <person name="Karst U."/>
            <person name="Goesmann A."/>
            <person name="Oehm S."/>
            <person name="Puhler A."/>
            <person name="Merkl R."/>
            <person name="Vorwerk S."/>
            <person name="Glaser P."/>
            <person name="Garrido P."/>
            <person name="Rusniok C."/>
            <person name="Buchrieser C."/>
            <person name="Goebel W."/>
            <person name="Chakraborty T."/>
        </authorList>
    </citation>
    <scope>NUCLEOTIDE SEQUENCE [LARGE SCALE GENOMIC DNA]</scope>
    <source>
        <strain>CLIP80459</strain>
    </source>
</reference>
<keyword id="KW-0963">Cytoplasm</keyword>
<keyword id="KW-0489">Methyltransferase</keyword>
<keyword id="KW-0698">rRNA processing</keyword>
<keyword id="KW-0949">S-adenosyl-L-methionine</keyword>
<keyword id="KW-0808">Transferase</keyword>
<accession>C1KWZ4</accession>
<evidence type="ECO:0000255" key="1">
    <source>
        <dbReference type="HAMAP-Rule" id="MF_01007"/>
    </source>
</evidence>
<dbReference type="EC" id="2.1.1.199" evidence="1"/>
<dbReference type="EMBL" id="FM242711">
    <property type="protein sequence ID" value="CAS05821.1"/>
    <property type="molecule type" value="Genomic_DNA"/>
</dbReference>
<dbReference type="RefSeq" id="WP_003731344.1">
    <property type="nucleotide sequence ID" value="NC_012488.1"/>
</dbReference>
<dbReference type="SMR" id="C1KWZ4"/>
<dbReference type="KEGG" id="lmc:Lm4b_02062"/>
<dbReference type="HOGENOM" id="CLU_038422_2_0_9"/>
<dbReference type="GO" id="GO:0005737">
    <property type="term" value="C:cytoplasm"/>
    <property type="evidence" value="ECO:0007669"/>
    <property type="project" value="UniProtKB-SubCell"/>
</dbReference>
<dbReference type="GO" id="GO:0071424">
    <property type="term" value="F:rRNA (cytosine-N4-)-methyltransferase activity"/>
    <property type="evidence" value="ECO:0007669"/>
    <property type="project" value="UniProtKB-UniRule"/>
</dbReference>
<dbReference type="GO" id="GO:0070475">
    <property type="term" value="P:rRNA base methylation"/>
    <property type="evidence" value="ECO:0007669"/>
    <property type="project" value="UniProtKB-UniRule"/>
</dbReference>
<dbReference type="FunFam" id="1.10.150.170:FF:000001">
    <property type="entry name" value="Ribosomal RNA small subunit methyltransferase H"/>
    <property type="match status" value="1"/>
</dbReference>
<dbReference type="Gene3D" id="1.10.150.170">
    <property type="entry name" value="Putative methyltransferase TM0872, insert domain"/>
    <property type="match status" value="1"/>
</dbReference>
<dbReference type="Gene3D" id="3.40.50.150">
    <property type="entry name" value="Vaccinia Virus protein VP39"/>
    <property type="match status" value="1"/>
</dbReference>
<dbReference type="HAMAP" id="MF_01007">
    <property type="entry name" value="16SrRNA_methyltr_H"/>
    <property type="match status" value="1"/>
</dbReference>
<dbReference type="InterPro" id="IPR002903">
    <property type="entry name" value="RsmH"/>
</dbReference>
<dbReference type="InterPro" id="IPR023397">
    <property type="entry name" value="SAM-dep_MeTrfase_MraW_recog"/>
</dbReference>
<dbReference type="InterPro" id="IPR029063">
    <property type="entry name" value="SAM-dependent_MTases_sf"/>
</dbReference>
<dbReference type="NCBIfam" id="TIGR00006">
    <property type="entry name" value="16S rRNA (cytosine(1402)-N(4))-methyltransferase RsmH"/>
    <property type="match status" value="1"/>
</dbReference>
<dbReference type="PANTHER" id="PTHR11265:SF0">
    <property type="entry name" value="12S RRNA N4-METHYLCYTIDINE METHYLTRANSFERASE"/>
    <property type="match status" value="1"/>
</dbReference>
<dbReference type="PANTHER" id="PTHR11265">
    <property type="entry name" value="S-ADENOSYL-METHYLTRANSFERASE MRAW"/>
    <property type="match status" value="1"/>
</dbReference>
<dbReference type="Pfam" id="PF01795">
    <property type="entry name" value="Methyltransf_5"/>
    <property type="match status" value="1"/>
</dbReference>
<dbReference type="PIRSF" id="PIRSF004486">
    <property type="entry name" value="MraW"/>
    <property type="match status" value="1"/>
</dbReference>
<dbReference type="SUPFAM" id="SSF81799">
    <property type="entry name" value="Putative methyltransferase TM0872, insert domain"/>
    <property type="match status" value="1"/>
</dbReference>
<dbReference type="SUPFAM" id="SSF53335">
    <property type="entry name" value="S-adenosyl-L-methionine-dependent methyltransferases"/>
    <property type="match status" value="1"/>
</dbReference>
<proteinExistence type="inferred from homology"/>
<organism>
    <name type="scientific">Listeria monocytogenes serotype 4b (strain CLIP80459)</name>
    <dbReference type="NCBI Taxonomy" id="568819"/>
    <lineage>
        <taxon>Bacteria</taxon>
        <taxon>Bacillati</taxon>
        <taxon>Bacillota</taxon>
        <taxon>Bacilli</taxon>
        <taxon>Bacillales</taxon>
        <taxon>Listeriaceae</taxon>
        <taxon>Listeria</taxon>
    </lineage>
</organism>
<feature type="chain" id="PRO_0000386962" description="Ribosomal RNA small subunit methyltransferase H">
    <location>
        <begin position="1"/>
        <end position="312"/>
    </location>
</feature>
<feature type="binding site" evidence="1">
    <location>
        <begin position="32"/>
        <end position="34"/>
    </location>
    <ligand>
        <name>S-adenosyl-L-methionine</name>
        <dbReference type="ChEBI" id="CHEBI:59789"/>
    </ligand>
</feature>
<feature type="binding site" evidence="1">
    <location>
        <position position="52"/>
    </location>
    <ligand>
        <name>S-adenosyl-L-methionine</name>
        <dbReference type="ChEBI" id="CHEBI:59789"/>
    </ligand>
</feature>
<feature type="binding site" evidence="1">
    <location>
        <position position="79"/>
    </location>
    <ligand>
        <name>S-adenosyl-L-methionine</name>
        <dbReference type="ChEBI" id="CHEBI:59789"/>
    </ligand>
</feature>
<feature type="binding site" evidence="1">
    <location>
        <position position="100"/>
    </location>
    <ligand>
        <name>S-adenosyl-L-methionine</name>
        <dbReference type="ChEBI" id="CHEBI:59789"/>
    </ligand>
</feature>
<feature type="binding site" evidence="1">
    <location>
        <position position="107"/>
    </location>
    <ligand>
        <name>S-adenosyl-L-methionine</name>
        <dbReference type="ChEBI" id="CHEBI:59789"/>
    </ligand>
</feature>
<comment type="function">
    <text evidence="1">Specifically methylates the N4 position of cytidine in position 1402 (C1402) of 16S rRNA.</text>
</comment>
<comment type="catalytic activity">
    <reaction evidence="1">
        <text>cytidine(1402) in 16S rRNA + S-adenosyl-L-methionine = N(4)-methylcytidine(1402) in 16S rRNA + S-adenosyl-L-homocysteine + H(+)</text>
        <dbReference type="Rhea" id="RHEA:42928"/>
        <dbReference type="Rhea" id="RHEA-COMP:10286"/>
        <dbReference type="Rhea" id="RHEA-COMP:10287"/>
        <dbReference type="ChEBI" id="CHEBI:15378"/>
        <dbReference type="ChEBI" id="CHEBI:57856"/>
        <dbReference type="ChEBI" id="CHEBI:59789"/>
        <dbReference type="ChEBI" id="CHEBI:74506"/>
        <dbReference type="ChEBI" id="CHEBI:82748"/>
        <dbReference type="EC" id="2.1.1.199"/>
    </reaction>
</comment>
<comment type="subcellular location">
    <subcellularLocation>
        <location evidence="1">Cytoplasm</location>
    </subcellularLocation>
</comment>
<comment type="similarity">
    <text evidence="1">Belongs to the methyltransferase superfamily. RsmH family.</text>
</comment>
<sequence length="312" mass="35450">MFKHETVLLHETVDMLEVKPDGIYVDATLGGAGHSEYLLNKLNEKGHLFAFDQDQTAIDNAKIKLADYSDKVTFIKANFRDMKEALNERGIEAVDGILYDLGVSSPQLDERERGFSYHQDAALDMRMDQEQELTAKIVVNEWSYQDLIRIFFQYGEEKFSKQIAREIERRREVKPIETTGELVDIIKTAIPAPARRKGGHPGKRTFQAIRIAVNDELGAVEDSLEKALTLLKPGGRISVITFHSLEDRITKHLFQEATKGPDLPPGLPVIPDEYKPDFKLATRKPIVPSEEELEQNNRARSAKLRVIEKIIK</sequence>
<protein>
    <recommendedName>
        <fullName evidence="1">Ribosomal RNA small subunit methyltransferase H</fullName>
        <ecNumber evidence="1">2.1.1.199</ecNumber>
    </recommendedName>
    <alternativeName>
        <fullName evidence="1">16S rRNA m(4)C1402 methyltransferase</fullName>
    </alternativeName>
    <alternativeName>
        <fullName evidence="1">rRNA (cytosine-N(4)-)-methyltransferase RsmH</fullName>
    </alternativeName>
</protein>
<name>RSMH_LISMC</name>
<gene>
    <name evidence="1" type="primary">rsmH</name>
    <name type="synonym">mraW</name>
    <name type="ordered locus">Lm4b_02062</name>
</gene>